<name>CCA_ECO5E</name>
<dbReference type="EC" id="2.7.7.72" evidence="1"/>
<dbReference type="EC" id="3.1.3.-" evidence="1"/>
<dbReference type="EC" id="3.1.4.-" evidence="1"/>
<dbReference type="EMBL" id="CP001164">
    <property type="protein sequence ID" value="ACI35408.1"/>
    <property type="molecule type" value="Genomic_DNA"/>
</dbReference>
<dbReference type="RefSeq" id="WP_000708496.1">
    <property type="nucleotide sequence ID" value="NC_011353.1"/>
</dbReference>
<dbReference type="SMR" id="B5YR96"/>
<dbReference type="KEGG" id="ecf:ECH74115_4368"/>
<dbReference type="HOGENOM" id="CLU_015961_1_1_6"/>
<dbReference type="GO" id="GO:0005524">
    <property type="term" value="F:ATP binding"/>
    <property type="evidence" value="ECO:0007669"/>
    <property type="project" value="UniProtKB-UniRule"/>
</dbReference>
<dbReference type="GO" id="GO:0004810">
    <property type="term" value="F:CCA tRNA nucleotidyltransferase activity"/>
    <property type="evidence" value="ECO:0007669"/>
    <property type="project" value="UniProtKB-UniRule"/>
</dbReference>
<dbReference type="GO" id="GO:0004112">
    <property type="term" value="F:cyclic-nucleotide phosphodiesterase activity"/>
    <property type="evidence" value="ECO:0007669"/>
    <property type="project" value="UniProtKB-UniRule"/>
</dbReference>
<dbReference type="GO" id="GO:0000287">
    <property type="term" value="F:magnesium ion binding"/>
    <property type="evidence" value="ECO:0007669"/>
    <property type="project" value="UniProtKB-UniRule"/>
</dbReference>
<dbReference type="GO" id="GO:0016791">
    <property type="term" value="F:phosphatase activity"/>
    <property type="evidence" value="ECO:0007669"/>
    <property type="project" value="UniProtKB-UniRule"/>
</dbReference>
<dbReference type="GO" id="GO:0000049">
    <property type="term" value="F:tRNA binding"/>
    <property type="evidence" value="ECO:0007669"/>
    <property type="project" value="UniProtKB-UniRule"/>
</dbReference>
<dbReference type="GO" id="GO:0042245">
    <property type="term" value="P:RNA repair"/>
    <property type="evidence" value="ECO:0007669"/>
    <property type="project" value="UniProtKB-KW"/>
</dbReference>
<dbReference type="GO" id="GO:0001680">
    <property type="term" value="P:tRNA 3'-terminal CCA addition"/>
    <property type="evidence" value="ECO:0007669"/>
    <property type="project" value="UniProtKB-UniRule"/>
</dbReference>
<dbReference type="CDD" id="cd00077">
    <property type="entry name" value="HDc"/>
    <property type="match status" value="1"/>
</dbReference>
<dbReference type="CDD" id="cd05398">
    <property type="entry name" value="NT_ClassII-CCAase"/>
    <property type="match status" value="1"/>
</dbReference>
<dbReference type="FunFam" id="1.10.3090.10:FF:000001">
    <property type="entry name" value="Multifunctional CCA protein"/>
    <property type="match status" value="1"/>
</dbReference>
<dbReference type="FunFam" id="3.30.460.10:FF:000016">
    <property type="entry name" value="Multifunctional CCA protein"/>
    <property type="match status" value="1"/>
</dbReference>
<dbReference type="Gene3D" id="3.30.460.10">
    <property type="entry name" value="Beta Polymerase, domain 2"/>
    <property type="match status" value="1"/>
</dbReference>
<dbReference type="Gene3D" id="1.10.3090.10">
    <property type="entry name" value="cca-adding enzyme, domain 2"/>
    <property type="match status" value="1"/>
</dbReference>
<dbReference type="HAMAP" id="MF_01261">
    <property type="entry name" value="CCA_bact_type1"/>
    <property type="match status" value="1"/>
</dbReference>
<dbReference type="HAMAP" id="MF_01262">
    <property type="entry name" value="CCA_bact_type2"/>
    <property type="match status" value="1"/>
</dbReference>
<dbReference type="InterPro" id="IPR012006">
    <property type="entry name" value="CCA_bact"/>
</dbReference>
<dbReference type="InterPro" id="IPR003607">
    <property type="entry name" value="HD/PDEase_dom"/>
</dbReference>
<dbReference type="InterPro" id="IPR006674">
    <property type="entry name" value="HD_domain"/>
</dbReference>
<dbReference type="InterPro" id="IPR043519">
    <property type="entry name" value="NT_sf"/>
</dbReference>
<dbReference type="InterPro" id="IPR002646">
    <property type="entry name" value="PolA_pol_head_dom"/>
</dbReference>
<dbReference type="InterPro" id="IPR032828">
    <property type="entry name" value="PolyA_RNA-bd"/>
</dbReference>
<dbReference type="InterPro" id="IPR050124">
    <property type="entry name" value="tRNA_CCA-adding_enzyme"/>
</dbReference>
<dbReference type="NCBIfam" id="NF008137">
    <property type="entry name" value="PRK10885.1"/>
    <property type="match status" value="1"/>
</dbReference>
<dbReference type="PANTHER" id="PTHR47545">
    <property type="entry name" value="MULTIFUNCTIONAL CCA PROTEIN"/>
    <property type="match status" value="1"/>
</dbReference>
<dbReference type="PANTHER" id="PTHR47545:SF1">
    <property type="entry name" value="MULTIFUNCTIONAL CCA PROTEIN"/>
    <property type="match status" value="1"/>
</dbReference>
<dbReference type="Pfam" id="PF01966">
    <property type="entry name" value="HD"/>
    <property type="match status" value="1"/>
</dbReference>
<dbReference type="Pfam" id="PF01743">
    <property type="entry name" value="PolyA_pol"/>
    <property type="match status" value="1"/>
</dbReference>
<dbReference type="Pfam" id="PF12627">
    <property type="entry name" value="PolyA_pol_RNAbd"/>
    <property type="match status" value="1"/>
</dbReference>
<dbReference type="PIRSF" id="PIRSF000813">
    <property type="entry name" value="CCA_bact"/>
    <property type="match status" value="1"/>
</dbReference>
<dbReference type="SUPFAM" id="SSF81301">
    <property type="entry name" value="Nucleotidyltransferase"/>
    <property type="match status" value="1"/>
</dbReference>
<dbReference type="SUPFAM" id="SSF81891">
    <property type="entry name" value="Poly A polymerase C-terminal region-like"/>
    <property type="match status" value="1"/>
</dbReference>
<dbReference type="PROSITE" id="PS51831">
    <property type="entry name" value="HD"/>
    <property type="match status" value="1"/>
</dbReference>
<proteinExistence type="inferred from homology"/>
<sequence>MKIYLVGGAVRDALLGLPVKDRDWVVVGSTPQEMLDAGYQQVGRDFPVFLHPQTHEEYALARTERKSGSGYTGFTCYAAPDVTLEDDLKRRDLTINALAQDDNGEIIDPYNGLGDLQNRLLRHVSPAFGEDPLRVLRVARFAARYAHLGFRIADETLTLMREMTHAGELEHLTPERVWKETENALTTRNPQVFFQVLRDCGALRVLFPEIDALFGVPAPARWHPEIDTGIHTLMTLSMAAMLSPQVDVRFTTLCHDLGKGLTPPELWPRHHGHGPAGVKLVEQLCQRLRVPNEIRDLARLVAEFHDLIHTFPMLNPKTIVKLFDSIDAWRKPQRVEQLALTSEADVRGRTGFESADYPQGRWLREAWEVAQSVPTKAVVEAGFKGVEIREELTRRRIAAVASWKEQRCPKPE</sequence>
<accession>B5YR96</accession>
<feature type="chain" id="PRO_1000140031" description="Multifunctional CCA protein">
    <location>
        <begin position="1"/>
        <end position="412"/>
    </location>
</feature>
<feature type="domain" description="HD" evidence="1">
    <location>
        <begin position="228"/>
        <end position="329"/>
    </location>
</feature>
<feature type="binding site" evidence="1">
    <location>
        <position position="8"/>
    </location>
    <ligand>
        <name>ATP</name>
        <dbReference type="ChEBI" id="CHEBI:30616"/>
    </ligand>
</feature>
<feature type="binding site" evidence="1">
    <location>
        <position position="8"/>
    </location>
    <ligand>
        <name>CTP</name>
        <dbReference type="ChEBI" id="CHEBI:37563"/>
    </ligand>
</feature>
<feature type="binding site" evidence="1">
    <location>
        <position position="11"/>
    </location>
    <ligand>
        <name>ATP</name>
        <dbReference type="ChEBI" id="CHEBI:30616"/>
    </ligand>
</feature>
<feature type="binding site" evidence="1">
    <location>
        <position position="11"/>
    </location>
    <ligand>
        <name>CTP</name>
        <dbReference type="ChEBI" id="CHEBI:37563"/>
    </ligand>
</feature>
<feature type="binding site" evidence="1">
    <location>
        <position position="21"/>
    </location>
    <ligand>
        <name>Mg(2+)</name>
        <dbReference type="ChEBI" id="CHEBI:18420"/>
    </ligand>
</feature>
<feature type="binding site" evidence="1">
    <location>
        <position position="23"/>
    </location>
    <ligand>
        <name>Mg(2+)</name>
        <dbReference type="ChEBI" id="CHEBI:18420"/>
    </ligand>
</feature>
<feature type="binding site" evidence="1">
    <location>
        <position position="91"/>
    </location>
    <ligand>
        <name>ATP</name>
        <dbReference type="ChEBI" id="CHEBI:30616"/>
    </ligand>
</feature>
<feature type="binding site" evidence="1">
    <location>
        <position position="91"/>
    </location>
    <ligand>
        <name>CTP</name>
        <dbReference type="ChEBI" id="CHEBI:37563"/>
    </ligand>
</feature>
<feature type="binding site" evidence="1">
    <location>
        <position position="137"/>
    </location>
    <ligand>
        <name>ATP</name>
        <dbReference type="ChEBI" id="CHEBI:30616"/>
    </ligand>
</feature>
<feature type="binding site" evidence="1">
    <location>
        <position position="137"/>
    </location>
    <ligand>
        <name>CTP</name>
        <dbReference type="ChEBI" id="CHEBI:37563"/>
    </ligand>
</feature>
<feature type="binding site" evidence="1">
    <location>
        <position position="140"/>
    </location>
    <ligand>
        <name>ATP</name>
        <dbReference type="ChEBI" id="CHEBI:30616"/>
    </ligand>
</feature>
<feature type="binding site" evidence="1">
    <location>
        <position position="140"/>
    </location>
    <ligand>
        <name>CTP</name>
        <dbReference type="ChEBI" id="CHEBI:37563"/>
    </ligand>
</feature>
<evidence type="ECO:0000255" key="1">
    <source>
        <dbReference type="HAMAP-Rule" id="MF_01261"/>
    </source>
</evidence>
<keyword id="KW-0067">ATP-binding</keyword>
<keyword id="KW-0378">Hydrolase</keyword>
<keyword id="KW-0460">Magnesium</keyword>
<keyword id="KW-0479">Metal-binding</keyword>
<keyword id="KW-0511">Multifunctional enzyme</keyword>
<keyword id="KW-0533">Nickel</keyword>
<keyword id="KW-0547">Nucleotide-binding</keyword>
<keyword id="KW-0548">Nucleotidyltransferase</keyword>
<keyword id="KW-0692">RNA repair</keyword>
<keyword id="KW-0694">RNA-binding</keyword>
<keyword id="KW-0808">Transferase</keyword>
<keyword id="KW-0819">tRNA processing</keyword>
<comment type="function">
    <text evidence="1">Catalyzes the addition and repair of the essential 3'-terminal CCA sequence in tRNAs without using a nucleic acid template. Adds these three nucleotides in the order of C, C, and A to the tRNA nucleotide-73, using CTP and ATP as substrates and producing inorganic pyrophosphate. tRNA 3'-terminal CCA addition is required both for tRNA processing and repair. Also involved in tRNA surveillance by mediating tandem CCA addition to generate a CCACCA at the 3' terminus of unstable tRNAs. While stable tRNAs receive only 3'-terminal CCA, unstable tRNAs are marked with CCACCA and rapidly degraded.</text>
</comment>
<comment type="catalytic activity">
    <reaction evidence="1">
        <text>a tRNA precursor + 2 CTP + ATP = a tRNA with a 3' CCA end + 3 diphosphate</text>
        <dbReference type="Rhea" id="RHEA:14433"/>
        <dbReference type="Rhea" id="RHEA-COMP:10465"/>
        <dbReference type="Rhea" id="RHEA-COMP:10468"/>
        <dbReference type="ChEBI" id="CHEBI:30616"/>
        <dbReference type="ChEBI" id="CHEBI:33019"/>
        <dbReference type="ChEBI" id="CHEBI:37563"/>
        <dbReference type="ChEBI" id="CHEBI:74896"/>
        <dbReference type="ChEBI" id="CHEBI:83071"/>
        <dbReference type="EC" id="2.7.7.72"/>
    </reaction>
</comment>
<comment type="catalytic activity">
    <reaction evidence="1">
        <text>a tRNA with a 3' CCA end + 2 CTP + ATP = a tRNA with a 3' CCACCA end + 3 diphosphate</text>
        <dbReference type="Rhea" id="RHEA:76235"/>
        <dbReference type="Rhea" id="RHEA-COMP:10468"/>
        <dbReference type="Rhea" id="RHEA-COMP:18655"/>
        <dbReference type="ChEBI" id="CHEBI:30616"/>
        <dbReference type="ChEBI" id="CHEBI:33019"/>
        <dbReference type="ChEBI" id="CHEBI:37563"/>
        <dbReference type="ChEBI" id="CHEBI:83071"/>
        <dbReference type="ChEBI" id="CHEBI:195187"/>
    </reaction>
    <physiologicalReaction direction="left-to-right" evidence="1">
        <dbReference type="Rhea" id="RHEA:76236"/>
    </physiologicalReaction>
</comment>
<comment type="cofactor">
    <cofactor evidence="1">
        <name>Mg(2+)</name>
        <dbReference type="ChEBI" id="CHEBI:18420"/>
    </cofactor>
    <text evidence="1">Magnesium is required for nucleotidyltransferase activity.</text>
</comment>
<comment type="cofactor">
    <cofactor evidence="1">
        <name>Ni(2+)</name>
        <dbReference type="ChEBI" id="CHEBI:49786"/>
    </cofactor>
    <text evidence="1">Nickel for phosphatase activity.</text>
</comment>
<comment type="subunit">
    <text evidence="1">Monomer. Can also form homodimers and oligomers.</text>
</comment>
<comment type="domain">
    <text evidence="1">Comprises two domains: an N-terminal domain containing the nucleotidyltransferase activity and a C-terminal HD domain associated with both phosphodiesterase and phosphatase activities.</text>
</comment>
<comment type="miscellaneous">
    <text evidence="1">A single active site specifically recognizes both ATP and CTP and is responsible for their addition.</text>
</comment>
<comment type="similarity">
    <text evidence="1">Belongs to the tRNA nucleotidyltransferase/poly(A) polymerase family. Bacterial CCA-adding enzyme type 1 subfamily.</text>
</comment>
<organism>
    <name type="scientific">Escherichia coli O157:H7 (strain EC4115 / EHEC)</name>
    <dbReference type="NCBI Taxonomy" id="444450"/>
    <lineage>
        <taxon>Bacteria</taxon>
        <taxon>Pseudomonadati</taxon>
        <taxon>Pseudomonadota</taxon>
        <taxon>Gammaproteobacteria</taxon>
        <taxon>Enterobacterales</taxon>
        <taxon>Enterobacteriaceae</taxon>
        <taxon>Escherichia</taxon>
    </lineage>
</organism>
<protein>
    <recommendedName>
        <fullName evidence="1">Multifunctional CCA protein</fullName>
    </recommendedName>
    <domain>
        <recommendedName>
            <fullName evidence="1">CCA-adding enzyme</fullName>
            <ecNumber evidence="1">2.7.7.72</ecNumber>
        </recommendedName>
        <alternativeName>
            <fullName evidence="1">CCA tRNA nucleotidyltransferase</fullName>
        </alternativeName>
        <alternativeName>
            <fullName evidence="1">tRNA CCA-pyrophosphorylase</fullName>
        </alternativeName>
        <alternativeName>
            <fullName evidence="1">tRNA adenylyl-/cytidylyl-transferase</fullName>
        </alternativeName>
        <alternativeName>
            <fullName evidence="1">tRNA nucleotidyltransferase</fullName>
        </alternativeName>
        <alternativeName>
            <fullName evidence="1">tRNA-NT</fullName>
        </alternativeName>
    </domain>
    <domain>
        <recommendedName>
            <fullName evidence="1">2'-nucleotidase</fullName>
            <ecNumber evidence="1">3.1.3.-</ecNumber>
        </recommendedName>
    </domain>
    <domain>
        <recommendedName>
            <fullName evidence="1">2',3'-cyclic phosphodiesterase</fullName>
            <ecNumber evidence="1">3.1.4.-</ecNumber>
        </recommendedName>
    </domain>
    <domain>
        <recommendedName>
            <fullName evidence="1">Phosphatase</fullName>
            <ecNumber evidence="1">3.1.3.-</ecNumber>
        </recommendedName>
    </domain>
</protein>
<gene>
    <name evidence="1" type="primary">cca</name>
    <name type="ordered locus">ECH74115_4368</name>
</gene>
<reference key="1">
    <citation type="journal article" date="2011" name="Proc. Natl. Acad. Sci. U.S.A.">
        <title>Genomic anatomy of Escherichia coli O157:H7 outbreaks.</title>
        <authorList>
            <person name="Eppinger M."/>
            <person name="Mammel M.K."/>
            <person name="Leclerc J.E."/>
            <person name="Ravel J."/>
            <person name="Cebula T.A."/>
        </authorList>
    </citation>
    <scope>NUCLEOTIDE SEQUENCE [LARGE SCALE GENOMIC DNA]</scope>
    <source>
        <strain>EC4115 / EHEC</strain>
    </source>
</reference>